<name>MKS1_MOUSE</name>
<keyword id="KW-0966">Cell projection</keyword>
<keyword id="KW-0969">Cilium</keyword>
<keyword id="KW-0970">Cilium biogenesis/degradation</keyword>
<keyword id="KW-0963">Cytoplasm</keyword>
<keyword id="KW-0206">Cytoskeleton</keyword>
<keyword id="KW-1185">Reference proteome</keyword>
<comment type="function">
    <text evidence="5 6 8 10">Component of the tectonic-like complex, a complex localized at the transition zone of primary cilia and acting as a barrier that prevents diffusion of transmembrane proteins between the cilia and plasma membranes. Involved in centrosome migration to the apical cell surface during early ciliogenesis. Required for ciliary structure and function, including a role in regulating length and appropriate number through modulating centrosome duplication. Required for cell branching morphology.</text>
</comment>
<comment type="subunit">
    <text evidence="2 7 8 9 10">Part of the tectonic-like complex (also named B9 complex) (PubMed:21725307, PubMed:22179047). Interacts with TMEM107 (By similarity). Interacts with TCTN3, AHI1, TCTN1, TCTN2, CC2D2A (PubMed:21565611). Interacts with FLNA. Interacts with TMEM67 (By similarity). Interacts with B9D1 and B9D2 (PubMed:21565611, PubMed:21763481).</text>
</comment>
<comment type="interaction">
    <interactant intactId="EBI-4281059">
        <id>Q5SW45</id>
    </interactant>
    <interactant intactId="EBI-5652050">
        <id>Q9R1S0</id>
        <label>B9d1</label>
    </interactant>
    <organismsDiffer>false</organismsDiffer>
    <experiments>4</experiments>
</comment>
<comment type="interaction">
    <interactant intactId="EBI-4281059">
        <id>Q5SW45</id>
    </interactant>
    <interactant intactId="EBI-5652008">
        <id>Q3UK10</id>
        <label>B9d2</label>
    </interactant>
    <organismsDiffer>false</organismsDiffer>
    <experiments>3</experiments>
</comment>
<comment type="subcellular location">
    <subcellularLocation>
        <location evidence="8">Cytoplasm</location>
        <location evidence="8">Cytoskeleton</location>
        <location evidence="8">Cilium basal body</location>
    </subcellularLocation>
    <subcellularLocation>
        <location evidence="1">Cytoplasm</location>
        <location evidence="1">Cytoskeleton</location>
        <location evidence="1">Microtubule organizing center</location>
        <location evidence="1">Centrosome</location>
    </subcellularLocation>
    <text>Localizes at the transition zone, a region between the basal body and the ciliary axoneme.</text>
</comment>
<comment type="tissue specificity">
    <text evidence="4">Widely expressed in embryo at 15.5 dpc, with a relatively strong expression in brain, liver, kidney and digits of the upper limbs. Highly expressed in bronchiolar epithelium.</text>
</comment>
<reference key="1">
    <citation type="journal article" date="2005" name="Science">
        <title>The transcriptional landscape of the mammalian genome.</title>
        <authorList>
            <person name="Carninci P."/>
            <person name="Kasukawa T."/>
            <person name="Katayama S."/>
            <person name="Gough J."/>
            <person name="Frith M.C."/>
            <person name="Maeda N."/>
            <person name="Oyama R."/>
            <person name="Ravasi T."/>
            <person name="Lenhard B."/>
            <person name="Wells C."/>
            <person name="Kodzius R."/>
            <person name="Shimokawa K."/>
            <person name="Bajic V.B."/>
            <person name="Brenner S.E."/>
            <person name="Batalov S."/>
            <person name="Forrest A.R."/>
            <person name="Zavolan M."/>
            <person name="Davis M.J."/>
            <person name="Wilming L.G."/>
            <person name="Aidinis V."/>
            <person name="Allen J.E."/>
            <person name="Ambesi-Impiombato A."/>
            <person name="Apweiler R."/>
            <person name="Aturaliya R.N."/>
            <person name="Bailey T.L."/>
            <person name="Bansal M."/>
            <person name="Baxter L."/>
            <person name="Beisel K.W."/>
            <person name="Bersano T."/>
            <person name="Bono H."/>
            <person name="Chalk A.M."/>
            <person name="Chiu K.P."/>
            <person name="Choudhary V."/>
            <person name="Christoffels A."/>
            <person name="Clutterbuck D.R."/>
            <person name="Crowe M.L."/>
            <person name="Dalla E."/>
            <person name="Dalrymple B.P."/>
            <person name="de Bono B."/>
            <person name="Della Gatta G."/>
            <person name="di Bernardo D."/>
            <person name="Down T."/>
            <person name="Engstrom P."/>
            <person name="Fagiolini M."/>
            <person name="Faulkner G."/>
            <person name="Fletcher C.F."/>
            <person name="Fukushima T."/>
            <person name="Furuno M."/>
            <person name="Futaki S."/>
            <person name="Gariboldi M."/>
            <person name="Georgii-Hemming P."/>
            <person name="Gingeras T.R."/>
            <person name="Gojobori T."/>
            <person name="Green R.E."/>
            <person name="Gustincich S."/>
            <person name="Harbers M."/>
            <person name="Hayashi Y."/>
            <person name="Hensch T.K."/>
            <person name="Hirokawa N."/>
            <person name="Hill D."/>
            <person name="Huminiecki L."/>
            <person name="Iacono M."/>
            <person name="Ikeo K."/>
            <person name="Iwama A."/>
            <person name="Ishikawa T."/>
            <person name="Jakt M."/>
            <person name="Kanapin A."/>
            <person name="Katoh M."/>
            <person name="Kawasawa Y."/>
            <person name="Kelso J."/>
            <person name="Kitamura H."/>
            <person name="Kitano H."/>
            <person name="Kollias G."/>
            <person name="Krishnan S.P."/>
            <person name="Kruger A."/>
            <person name="Kummerfeld S.K."/>
            <person name="Kurochkin I.V."/>
            <person name="Lareau L.F."/>
            <person name="Lazarevic D."/>
            <person name="Lipovich L."/>
            <person name="Liu J."/>
            <person name="Liuni S."/>
            <person name="McWilliam S."/>
            <person name="Madan Babu M."/>
            <person name="Madera M."/>
            <person name="Marchionni L."/>
            <person name="Matsuda H."/>
            <person name="Matsuzawa S."/>
            <person name="Miki H."/>
            <person name="Mignone F."/>
            <person name="Miyake S."/>
            <person name="Morris K."/>
            <person name="Mottagui-Tabar S."/>
            <person name="Mulder N."/>
            <person name="Nakano N."/>
            <person name="Nakauchi H."/>
            <person name="Ng P."/>
            <person name="Nilsson R."/>
            <person name="Nishiguchi S."/>
            <person name="Nishikawa S."/>
            <person name="Nori F."/>
            <person name="Ohara O."/>
            <person name="Okazaki Y."/>
            <person name="Orlando V."/>
            <person name="Pang K.C."/>
            <person name="Pavan W.J."/>
            <person name="Pavesi G."/>
            <person name="Pesole G."/>
            <person name="Petrovsky N."/>
            <person name="Piazza S."/>
            <person name="Reed J."/>
            <person name="Reid J.F."/>
            <person name="Ring B.Z."/>
            <person name="Ringwald M."/>
            <person name="Rost B."/>
            <person name="Ruan Y."/>
            <person name="Salzberg S.L."/>
            <person name="Sandelin A."/>
            <person name="Schneider C."/>
            <person name="Schoenbach C."/>
            <person name="Sekiguchi K."/>
            <person name="Semple C.A."/>
            <person name="Seno S."/>
            <person name="Sessa L."/>
            <person name="Sheng Y."/>
            <person name="Shibata Y."/>
            <person name="Shimada H."/>
            <person name="Shimada K."/>
            <person name="Silva D."/>
            <person name="Sinclair B."/>
            <person name="Sperling S."/>
            <person name="Stupka E."/>
            <person name="Sugiura K."/>
            <person name="Sultana R."/>
            <person name="Takenaka Y."/>
            <person name="Taki K."/>
            <person name="Tammoja K."/>
            <person name="Tan S.L."/>
            <person name="Tang S."/>
            <person name="Taylor M.S."/>
            <person name="Tegner J."/>
            <person name="Teichmann S.A."/>
            <person name="Ueda H.R."/>
            <person name="van Nimwegen E."/>
            <person name="Verardo R."/>
            <person name="Wei C.L."/>
            <person name="Yagi K."/>
            <person name="Yamanishi H."/>
            <person name="Zabarovsky E."/>
            <person name="Zhu S."/>
            <person name="Zimmer A."/>
            <person name="Hide W."/>
            <person name="Bult C."/>
            <person name="Grimmond S.M."/>
            <person name="Teasdale R.D."/>
            <person name="Liu E.T."/>
            <person name="Brusic V."/>
            <person name="Quackenbush J."/>
            <person name="Wahlestedt C."/>
            <person name="Mattick J.S."/>
            <person name="Hume D.A."/>
            <person name="Kai C."/>
            <person name="Sasaki D."/>
            <person name="Tomaru Y."/>
            <person name="Fukuda S."/>
            <person name="Kanamori-Katayama M."/>
            <person name="Suzuki M."/>
            <person name="Aoki J."/>
            <person name="Arakawa T."/>
            <person name="Iida J."/>
            <person name="Imamura K."/>
            <person name="Itoh M."/>
            <person name="Kato T."/>
            <person name="Kawaji H."/>
            <person name="Kawagashira N."/>
            <person name="Kawashima T."/>
            <person name="Kojima M."/>
            <person name="Kondo S."/>
            <person name="Konno H."/>
            <person name="Nakano K."/>
            <person name="Ninomiya N."/>
            <person name="Nishio T."/>
            <person name="Okada M."/>
            <person name="Plessy C."/>
            <person name="Shibata K."/>
            <person name="Shiraki T."/>
            <person name="Suzuki S."/>
            <person name="Tagami M."/>
            <person name="Waki K."/>
            <person name="Watahiki A."/>
            <person name="Okamura-Oho Y."/>
            <person name="Suzuki H."/>
            <person name="Kawai J."/>
            <person name="Hayashizaki Y."/>
        </authorList>
    </citation>
    <scope>NUCLEOTIDE SEQUENCE [LARGE SCALE MRNA]</scope>
    <source>
        <strain>C57BL/6J</strain>
        <tissue>Thymus</tissue>
    </source>
</reference>
<reference key="2">
    <citation type="journal article" date="2009" name="PLoS Biol.">
        <title>Lineage-specific biology revealed by a finished genome assembly of the mouse.</title>
        <authorList>
            <person name="Church D.M."/>
            <person name="Goodstadt L."/>
            <person name="Hillier L.W."/>
            <person name="Zody M.C."/>
            <person name="Goldstein S."/>
            <person name="She X."/>
            <person name="Bult C.J."/>
            <person name="Agarwala R."/>
            <person name="Cherry J.L."/>
            <person name="DiCuccio M."/>
            <person name="Hlavina W."/>
            <person name="Kapustin Y."/>
            <person name="Meric P."/>
            <person name="Maglott D."/>
            <person name="Birtle Z."/>
            <person name="Marques A.C."/>
            <person name="Graves T."/>
            <person name="Zhou S."/>
            <person name="Teague B."/>
            <person name="Potamousis K."/>
            <person name="Churas C."/>
            <person name="Place M."/>
            <person name="Herschleb J."/>
            <person name="Runnheim R."/>
            <person name="Forrest D."/>
            <person name="Amos-Landgraf J."/>
            <person name="Schwartz D.C."/>
            <person name="Cheng Z."/>
            <person name="Lindblad-Toh K."/>
            <person name="Eichler E.E."/>
            <person name="Ponting C.P."/>
        </authorList>
    </citation>
    <scope>NUCLEOTIDE SEQUENCE [LARGE SCALE GENOMIC DNA]</scope>
    <source>
        <strain>C57BL/6J</strain>
    </source>
</reference>
<reference key="3">
    <citation type="journal article" date="2006" name="Nat. Genet.">
        <title>MKS1, encoding a component of the flagellar apparatus basal body proteome, is mutated in Meckel syndrome.</title>
        <authorList>
            <person name="Kyttaelae M."/>
            <person name="Tallila J."/>
            <person name="Salonen R."/>
            <person name="Kopra O."/>
            <person name="Kohlschmidt N."/>
            <person name="Paavola-Sakki P."/>
            <person name="Peltonen L."/>
            <person name="Kestilae M."/>
        </authorList>
    </citation>
    <scope>TISSUE SPECIFICITY</scope>
</reference>
<reference key="4">
    <citation type="journal article" date="2007" name="Hum. Mol. Genet.">
        <title>The Meckel-Gruber syndrome proteins MKS1 and meckelin interact and are required for primary cilium formation.</title>
        <authorList>
            <person name="Dawe H.R."/>
            <person name="Smith U.M."/>
            <person name="Cullinane A.R."/>
            <person name="Gerrelli D."/>
            <person name="Cox P."/>
            <person name="Badano J.L."/>
            <person name="Blair-Reid S."/>
            <person name="Sriram N."/>
            <person name="Katsanis N."/>
            <person name="Attie-Bitach T."/>
            <person name="Afford S.C."/>
            <person name="Copp A.J."/>
            <person name="Kelly D.A."/>
            <person name="Gull K."/>
            <person name="Johnson C.A."/>
        </authorList>
    </citation>
    <scope>FUNCTION</scope>
</reference>
<reference key="5">
    <citation type="journal article" date="2009" name="Hum. Mol. Genet.">
        <title>Ciliary and centrosomal defects associated with mutation and depletion of the Meckel syndrome genes MKS1 and MKS3.</title>
        <authorList>
            <person name="Tammachote R."/>
            <person name="Hommerding C.J."/>
            <person name="Sinders R.M."/>
            <person name="Miller C.A."/>
            <person name="Czarnecki P.G."/>
            <person name="Leightner A.C."/>
            <person name="Salisbury J.L."/>
            <person name="Ward C.J."/>
            <person name="Torres V.E."/>
            <person name="Gattone V.H. II"/>
            <person name="Harris P.C."/>
        </authorList>
    </citation>
    <scope>FUNCTION</scope>
</reference>
<reference key="6">
    <citation type="journal article" date="2011" name="Am. J. Hum. Genet.">
        <title>Disruption of a ciliary B9 protein complex causes Meckel syndrome.</title>
        <authorList>
            <person name="Dowdle W.E."/>
            <person name="Robinson J.F."/>
            <person name="Kneist A."/>
            <person name="Sirerol-Piquer M.S."/>
            <person name="Frints S.G."/>
            <person name="Corbit K.C."/>
            <person name="Zaghloul N.A."/>
            <person name="van Lijnschoten G."/>
            <person name="Mulders L."/>
            <person name="Verver D.E."/>
            <person name="Zerres K."/>
            <person name="Reed R.R."/>
            <person name="Attie-Bitach T."/>
            <person name="Johnson C.A."/>
            <person name="Garcia-Verdugo J.M."/>
            <person name="Katsanis N."/>
            <person name="Bergmann C."/>
            <person name="Reiter J.F."/>
        </authorList>
    </citation>
    <scope>IDENTIFICATION IN A COMPLEX WITH B9D1 AND B9D2</scope>
</reference>
<reference key="7">
    <citation type="journal article" date="2011" name="Cell">
        <title>Mapping the NPHP-JBTS-MKS protein network reveals ciliopathy disease genes and pathways.</title>
        <authorList>
            <person name="Sang L."/>
            <person name="Miller J.J."/>
            <person name="Corbit K.C."/>
            <person name="Giles R.H."/>
            <person name="Brauer M.J."/>
            <person name="Otto E.A."/>
            <person name="Baye L.M."/>
            <person name="Wen X."/>
            <person name="Scales S.J."/>
            <person name="Kwong M."/>
            <person name="Huntzicker E.G."/>
            <person name="Sfakianos M.K."/>
            <person name="Sandoval W."/>
            <person name="Bazan J.F."/>
            <person name="Kulkarni P."/>
            <person name="Garcia-Gonzalo F.R."/>
            <person name="Seol A.D."/>
            <person name="O'Toole J.F."/>
            <person name="Held S."/>
            <person name="Reutter H.M."/>
            <person name="Lane W.S."/>
            <person name="Rafiq M.A."/>
            <person name="Noor A."/>
            <person name="Ansar M."/>
            <person name="Devi A.R."/>
            <person name="Sheffield V.C."/>
            <person name="Slusarski D.C."/>
            <person name="Vincent J.B."/>
            <person name="Doherty D.A."/>
            <person name="Hildebrandt F."/>
            <person name="Reiter J.F."/>
            <person name="Jackson P.K."/>
        </authorList>
    </citation>
    <scope>INTERACTION WITH TCTN1; TCTN2; TCTN3; CC2D2A; AHI1 AND B9D1</scope>
</reference>
<reference key="8">
    <citation type="journal article" date="2012" name="Nat. Cell Biol.">
        <title>A ciliopathy complex at the transition zone protects the cilia as a privileged membrane domain.</title>
        <authorList>
            <person name="Chih B."/>
            <person name="Liu P."/>
            <person name="Chinn Y."/>
            <person name="Chalouni C."/>
            <person name="Komuves L.G."/>
            <person name="Hass P.E."/>
            <person name="Sandoval W."/>
            <person name="Peterson A.S."/>
        </authorList>
    </citation>
    <scope>IDENTIFICATION IN THE TECTONIC-LIKE COMPLEX</scope>
    <scope>FUNCTION</scope>
</reference>
<reference key="9">
    <citation type="journal article" date="2011" name="Nat. Genet.">
        <title>A transition zone complex regulates mammalian ciliogenesis and ciliary membrane composition.</title>
        <authorList>
            <person name="Garcia-Gonzalo F.R."/>
            <person name="Corbit K.C."/>
            <person name="Sirerol-Piquer M.S."/>
            <person name="Ramaswami G."/>
            <person name="Otto E.A."/>
            <person name="Noriega T.R."/>
            <person name="Seol A.D."/>
            <person name="Robinson J.F."/>
            <person name="Bennett C.L."/>
            <person name="Josifova D.J."/>
            <person name="Garcia-Verdugo J.M."/>
            <person name="Katsanis N."/>
            <person name="Hildebrandt F."/>
            <person name="Reiter J.F."/>
        </authorList>
    </citation>
    <scope>FUNCTION</scope>
    <scope>SUBCELLULAR LOCATION</scope>
    <scope>IDENTIFICATION IN THE TECTONIC-LIKE COMPLEX</scope>
</reference>
<organism>
    <name type="scientific">Mus musculus</name>
    <name type="common">Mouse</name>
    <dbReference type="NCBI Taxonomy" id="10090"/>
    <lineage>
        <taxon>Eukaryota</taxon>
        <taxon>Metazoa</taxon>
        <taxon>Chordata</taxon>
        <taxon>Craniata</taxon>
        <taxon>Vertebrata</taxon>
        <taxon>Euteleostomi</taxon>
        <taxon>Mammalia</taxon>
        <taxon>Eutheria</taxon>
        <taxon>Euarchontoglires</taxon>
        <taxon>Glires</taxon>
        <taxon>Rodentia</taxon>
        <taxon>Myomorpha</taxon>
        <taxon>Muroidea</taxon>
        <taxon>Muridae</taxon>
        <taxon>Murinae</taxon>
        <taxon>Mus</taxon>
        <taxon>Mus</taxon>
    </lineage>
</organism>
<dbReference type="EMBL" id="AK030982">
    <property type="protein sequence ID" value="BAE20467.1"/>
    <property type="molecule type" value="mRNA"/>
</dbReference>
<dbReference type="EMBL" id="AL606805">
    <property type="status" value="NOT_ANNOTATED_CDS"/>
    <property type="molecule type" value="Genomic_DNA"/>
</dbReference>
<dbReference type="CCDS" id="CCDS36271.1"/>
<dbReference type="RefSeq" id="NP_001034773.2">
    <property type="nucleotide sequence ID" value="NM_001039684.3"/>
</dbReference>
<dbReference type="SMR" id="Q5SW45"/>
<dbReference type="BioGRID" id="237616">
    <property type="interactions" value="38"/>
</dbReference>
<dbReference type="CORUM" id="Q5SW45"/>
<dbReference type="FunCoup" id="Q5SW45">
    <property type="interactions" value="847"/>
</dbReference>
<dbReference type="IntAct" id="Q5SW45">
    <property type="interactions" value="22"/>
</dbReference>
<dbReference type="STRING" id="10090.ENSMUSP00000043790"/>
<dbReference type="GlyGen" id="Q5SW45">
    <property type="glycosylation" value="1 site"/>
</dbReference>
<dbReference type="iPTMnet" id="Q5SW45"/>
<dbReference type="PhosphoSitePlus" id="Q5SW45"/>
<dbReference type="PaxDb" id="10090-ENSMUSP00000043790"/>
<dbReference type="ProteomicsDB" id="295914"/>
<dbReference type="Antibodypedia" id="18351">
    <property type="antibodies" value="101 antibodies from 20 providers"/>
</dbReference>
<dbReference type="Ensembl" id="ENSMUST00000038196.7">
    <property type="protein sequence ID" value="ENSMUSP00000043790.7"/>
    <property type="gene ID" value="ENSMUSG00000034121.13"/>
</dbReference>
<dbReference type="GeneID" id="380718"/>
<dbReference type="KEGG" id="mmu:380718"/>
<dbReference type="UCSC" id="uc007kut.1">
    <property type="organism name" value="mouse"/>
</dbReference>
<dbReference type="AGR" id="MGI:3584243"/>
<dbReference type="CTD" id="54903"/>
<dbReference type="MGI" id="MGI:3584243">
    <property type="gene designation" value="Mks1"/>
</dbReference>
<dbReference type="VEuPathDB" id="HostDB:ENSMUSG00000034121"/>
<dbReference type="eggNOG" id="KOG4446">
    <property type="taxonomic scope" value="Eukaryota"/>
</dbReference>
<dbReference type="GeneTree" id="ENSGT00510000047471"/>
<dbReference type="HOGENOM" id="CLU_026711_0_1_1"/>
<dbReference type="InParanoid" id="Q5SW45"/>
<dbReference type="OMA" id="FTYVDHD"/>
<dbReference type="OrthoDB" id="10263520at2759"/>
<dbReference type="PhylomeDB" id="Q5SW45"/>
<dbReference type="TreeFam" id="TF323812"/>
<dbReference type="Reactome" id="R-MMU-5610787">
    <property type="pathway name" value="Hedgehog 'off' state"/>
</dbReference>
<dbReference type="Reactome" id="R-MMU-5620912">
    <property type="pathway name" value="Anchoring of the basal body to the plasma membrane"/>
</dbReference>
<dbReference type="BioGRID-ORCS" id="380718">
    <property type="hits" value="5 hits in 76 CRISPR screens"/>
</dbReference>
<dbReference type="PRO" id="PR:Q5SW45"/>
<dbReference type="Proteomes" id="UP000000589">
    <property type="component" value="Chromosome 11"/>
</dbReference>
<dbReference type="RNAct" id="Q5SW45">
    <property type="molecule type" value="protein"/>
</dbReference>
<dbReference type="Bgee" id="ENSMUSG00000034121">
    <property type="expression patterns" value="Expressed in retinal neural layer and 173 other cell types or tissues"/>
</dbReference>
<dbReference type="ExpressionAtlas" id="Q5SW45">
    <property type="expression patterns" value="baseline and differential"/>
</dbReference>
<dbReference type="GO" id="GO:0005814">
    <property type="term" value="C:centriole"/>
    <property type="evidence" value="ECO:0000314"/>
    <property type="project" value="MGI"/>
</dbReference>
<dbReference type="GO" id="GO:0005813">
    <property type="term" value="C:centrosome"/>
    <property type="evidence" value="ECO:0000314"/>
    <property type="project" value="MGI"/>
</dbReference>
<dbReference type="GO" id="GO:0036064">
    <property type="term" value="C:ciliary basal body"/>
    <property type="evidence" value="ECO:0007669"/>
    <property type="project" value="Ensembl"/>
</dbReference>
<dbReference type="GO" id="GO:0035869">
    <property type="term" value="C:ciliary transition zone"/>
    <property type="evidence" value="ECO:0000314"/>
    <property type="project" value="MGI"/>
</dbReference>
<dbReference type="GO" id="GO:0005737">
    <property type="term" value="C:cytoplasm"/>
    <property type="evidence" value="ECO:0007669"/>
    <property type="project" value="UniProtKB-KW"/>
</dbReference>
<dbReference type="GO" id="GO:0016020">
    <property type="term" value="C:membrane"/>
    <property type="evidence" value="ECO:0000314"/>
    <property type="project" value="MGI"/>
</dbReference>
<dbReference type="GO" id="GO:0036038">
    <property type="term" value="C:MKS complex"/>
    <property type="evidence" value="ECO:0000314"/>
    <property type="project" value="UniProtKB"/>
</dbReference>
<dbReference type="GO" id="GO:0005730">
    <property type="term" value="C:nucleolus"/>
    <property type="evidence" value="ECO:0007669"/>
    <property type="project" value="Ensembl"/>
</dbReference>
<dbReference type="GO" id="GO:0005654">
    <property type="term" value="C:nucleoplasm"/>
    <property type="evidence" value="ECO:0007669"/>
    <property type="project" value="Ensembl"/>
</dbReference>
<dbReference type="GO" id="GO:0048754">
    <property type="term" value="P:branching morphogenesis of an epithelial tube"/>
    <property type="evidence" value="ECO:0000315"/>
    <property type="project" value="UniProtKB"/>
</dbReference>
<dbReference type="GO" id="GO:0060411">
    <property type="term" value="P:cardiac septum morphogenesis"/>
    <property type="evidence" value="ECO:0000315"/>
    <property type="project" value="MGI"/>
</dbReference>
<dbReference type="GO" id="GO:0060271">
    <property type="term" value="P:cilium assembly"/>
    <property type="evidence" value="ECO:0000315"/>
    <property type="project" value="UniProtKB"/>
</dbReference>
<dbReference type="GO" id="GO:0061009">
    <property type="term" value="P:common bile duct development"/>
    <property type="evidence" value="ECO:0000315"/>
    <property type="project" value="MGI"/>
</dbReference>
<dbReference type="GO" id="GO:0007368">
    <property type="term" value="P:determination of left/right symmetry"/>
    <property type="evidence" value="ECO:0000315"/>
    <property type="project" value="MGI"/>
</dbReference>
<dbReference type="GO" id="GO:1990403">
    <property type="term" value="P:embryonic brain development"/>
    <property type="evidence" value="ECO:0000315"/>
    <property type="project" value="MGI"/>
</dbReference>
<dbReference type="GO" id="GO:0042733">
    <property type="term" value="P:embryonic digit morphogenesis"/>
    <property type="evidence" value="ECO:0000315"/>
    <property type="project" value="MGI"/>
</dbReference>
<dbReference type="GO" id="GO:0048706">
    <property type="term" value="P:embryonic skeletal system development"/>
    <property type="evidence" value="ECO:0000315"/>
    <property type="project" value="MGI"/>
</dbReference>
<dbReference type="GO" id="GO:0010669">
    <property type="term" value="P:epithelial structure maintenance"/>
    <property type="evidence" value="ECO:0000315"/>
    <property type="project" value="MGI"/>
</dbReference>
<dbReference type="GO" id="GO:0060322">
    <property type="term" value="P:head development"/>
    <property type="evidence" value="ECO:0000315"/>
    <property type="project" value="MGI"/>
</dbReference>
<dbReference type="GO" id="GO:0060122">
    <property type="term" value="P:inner ear receptor cell stereocilium organization"/>
    <property type="evidence" value="ECO:0000315"/>
    <property type="project" value="MGI"/>
</dbReference>
<dbReference type="GO" id="GO:0044458">
    <property type="term" value="P:motile cilium assembly"/>
    <property type="evidence" value="ECO:0000315"/>
    <property type="project" value="MGI"/>
</dbReference>
<dbReference type="GO" id="GO:0001843">
    <property type="term" value="P:neural tube closure"/>
    <property type="evidence" value="ECO:0000315"/>
    <property type="project" value="MGI"/>
</dbReference>
<dbReference type="GO" id="GO:1905515">
    <property type="term" value="P:non-motile cilium assembly"/>
    <property type="evidence" value="ECO:0000315"/>
    <property type="project" value="MGI"/>
</dbReference>
<dbReference type="GO" id="GO:0060828">
    <property type="term" value="P:regulation of canonical Wnt signaling pathway"/>
    <property type="evidence" value="ECO:0000315"/>
    <property type="project" value="MGI"/>
</dbReference>
<dbReference type="GO" id="GO:0008589">
    <property type="term" value="P:regulation of smoothened signaling pathway"/>
    <property type="evidence" value="ECO:0000315"/>
    <property type="project" value="MGI"/>
</dbReference>
<dbReference type="GO" id="GO:2000095">
    <property type="term" value="P:regulation of Wnt signaling pathway, planar cell polarity pathway"/>
    <property type="evidence" value="ECO:0000315"/>
    <property type="project" value="MGI"/>
</dbReference>
<dbReference type="GO" id="GO:0003271">
    <property type="term" value="P:smoothened signaling pathway involved in regulation of secondary heart field cardioblast proliferation"/>
    <property type="evidence" value="ECO:0000315"/>
    <property type="project" value="MGI"/>
</dbReference>
<dbReference type="InterPro" id="IPR010796">
    <property type="entry name" value="C2_B9-type_dom"/>
</dbReference>
<dbReference type="PANTHER" id="PTHR12968">
    <property type="entry name" value="B9 DOMAIN-CONTAINING"/>
    <property type="match status" value="1"/>
</dbReference>
<dbReference type="PANTHER" id="PTHR12968:SF4">
    <property type="entry name" value="TECTONIC-LIKE COMPLEX MEMBER MKS1"/>
    <property type="match status" value="1"/>
</dbReference>
<dbReference type="Pfam" id="PF07162">
    <property type="entry name" value="B9-C2"/>
    <property type="match status" value="1"/>
</dbReference>
<dbReference type="PROSITE" id="PS51381">
    <property type="entry name" value="C2_B9"/>
    <property type="match status" value="1"/>
</dbReference>
<evidence type="ECO:0000250" key="1"/>
<evidence type="ECO:0000250" key="2">
    <source>
        <dbReference type="UniProtKB" id="Q9NXB0"/>
    </source>
</evidence>
<evidence type="ECO:0000255" key="3">
    <source>
        <dbReference type="PROSITE-ProRule" id="PRU00713"/>
    </source>
</evidence>
<evidence type="ECO:0000269" key="4">
    <source>
    </source>
</evidence>
<evidence type="ECO:0000269" key="5">
    <source>
    </source>
</evidence>
<evidence type="ECO:0000269" key="6">
    <source>
    </source>
</evidence>
<evidence type="ECO:0000269" key="7">
    <source>
    </source>
</evidence>
<evidence type="ECO:0000269" key="8">
    <source>
    </source>
</evidence>
<evidence type="ECO:0000269" key="9">
    <source>
    </source>
</evidence>
<evidence type="ECO:0000269" key="10">
    <source>
    </source>
</evidence>
<evidence type="ECO:0000305" key="11"/>
<gene>
    <name type="primary">Mks1</name>
</gene>
<accession>Q5SW45</accession>
<accession>Q3V3W3</accession>
<proteinExistence type="evidence at protein level"/>
<feature type="chain" id="PRO_0000225687" description="Tectonic-like complex member MKS1">
    <location>
        <begin position="1"/>
        <end position="561"/>
    </location>
</feature>
<feature type="domain" description="C2 B9-type" evidence="3">
    <location>
        <begin position="314"/>
        <end position="442"/>
    </location>
</feature>
<feature type="sequence conflict" description="In Ref. 1; BAE20467." evidence="11" ref="1">
    <original>T</original>
    <variation>N</variation>
    <location>
        <position position="145"/>
    </location>
</feature>
<sequence length="561" mass="64416">MAEAVWSTDTGEAVYRSRDPVRNLRLRVHLQRITSSNFLHYQPAAQMGKDLIDLATFRPPQAASGHRPDEEEEEEVVIGWQEKLFSQFEVDLYQNESACQSPLDHQYRQEILKLENSGGRKNRRIFTYTDSDRYTDLEEYCQKITTSASEVPSFLAERMANVRRRRQDRRGVEGSKLKSRIVTWEPSEDFIKNNHAINTPLQTMYIMADLGPYGKLGYKVHEHVLCILKVDSNGVITVKPDFTGIKGPYRIETEGEKQEHTSAWKYTIDNVSSLAQPEEEEREQRVFKDLYGRHKEYLSSLVGTDFEMIAPGALRLFVNGEVVSAQGYEYDNLYVHFFVELPAANWSSPPFQQLSGVTQACATKSLGMDKVAYFSFPFTFEAFFLHEDESAESLPEWPVLYCKVLSLDFWQRYRVEGYGAVVLPATPGSHTLTVSTWRPMELGLVAELRRFFIGGSLELEDPSYVRIPGTFKGERLSRFGFRTETTGTVTFRLHCLQQSRAFMESNSLQKQMRSVLDRLEGFSQQSSTHNVLEAFRRARRRMQEARESLPQDLVSPTGTLT</sequence>
<protein>
    <recommendedName>
        <fullName evidence="11">Tectonic-like complex member MKS1</fullName>
    </recommendedName>
    <alternativeName>
        <fullName>Meckel syndrome type 1 protein homolog</fullName>
    </alternativeName>
</protein>